<feature type="chain" id="PRO_0000198809" description="3',5'-cyclic-AMP phosphodiesterase 4B">
    <location>
        <begin position="1"/>
        <end position="736"/>
    </location>
</feature>
<feature type="domain" description="PDEase" evidence="3">
    <location>
        <begin position="330"/>
        <end position="659"/>
    </location>
</feature>
<feature type="region of interest" description="Disordered" evidence="4">
    <location>
        <begin position="51"/>
        <end position="78"/>
    </location>
</feature>
<feature type="region of interest" description="Disordered" evidence="4">
    <location>
        <begin position="189"/>
        <end position="209"/>
    </location>
</feature>
<feature type="region of interest" description="Disordered" evidence="4">
    <location>
        <begin position="282"/>
        <end position="301"/>
    </location>
</feature>
<feature type="region of interest" description="Disordered" evidence="4">
    <location>
        <begin position="685"/>
        <end position="736"/>
    </location>
</feature>
<feature type="active site" description="Proton donor" evidence="22 31">
    <location>
        <position position="406"/>
    </location>
</feature>
<feature type="binding site" evidence="2">
    <location>
        <position position="406"/>
    </location>
    <ligand>
        <name>3',5'-cyclic AMP</name>
        <dbReference type="ChEBI" id="CHEBI:58165"/>
    </ligand>
</feature>
<feature type="binding site" evidence="6 7 31 32">
    <location>
        <position position="406"/>
    </location>
    <ligand>
        <name>AMP</name>
        <dbReference type="ChEBI" id="CHEBI:456215"/>
    </ligand>
</feature>
<feature type="binding site" evidence="6 31">
    <location>
        <position position="410"/>
    </location>
    <ligand>
        <name>AMP</name>
        <dbReference type="ChEBI" id="CHEBI:456215"/>
    </ligand>
</feature>
<feature type="binding site" evidence="6 7 8 9 11 12 29 30 31 32 33 34 35 36 37 38 39 40 41 42 43 44 45">
    <location>
        <position position="410"/>
    </location>
    <ligand>
        <name>Zn(2+)</name>
        <dbReference type="ChEBI" id="CHEBI:29105"/>
        <label>1</label>
    </ligand>
</feature>
<feature type="binding site" evidence="5 6 8 9 11 12 28 29 30 31 33 34 35 36 37 38 39 40 41 42 43 44 45">
    <location>
        <position position="446"/>
    </location>
    <ligand>
        <name>Zn(2+)</name>
        <dbReference type="ChEBI" id="CHEBI:29105"/>
        <label>1</label>
    </ligand>
</feature>
<feature type="binding site" evidence="6 7 31 32">
    <location>
        <position position="447"/>
    </location>
    <ligand>
        <name>AMP</name>
        <dbReference type="ChEBI" id="CHEBI:456215"/>
    </ligand>
</feature>
<feature type="binding site" evidence="5 7 8 9 12 28 32 33 34 35 36 37 38 39 40 41 42 43 45">
    <location>
        <position position="447"/>
    </location>
    <ligand>
        <name>Mg(2+)</name>
        <dbReference type="ChEBI" id="CHEBI:18420"/>
    </ligand>
</feature>
<feature type="binding site" evidence="6 29">
    <location>
        <position position="447"/>
    </location>
    <ligand>
        <name>Mn(2+)</name>
        <dbReference type="ChEBI" id="CHEBI:29035"/>
    </ligand>
</feature>
<feature type="binding site" evidence="5 6 7 8 9 11 12 28 29 30 31 32 33 34 35 36 37 38 39 40 41 42 43 44 45">
    <location>
        <position position="447"/>
    </location>
    <ligand>
        <name>Zn(2+)</name>
        <dbReference type="ChEBI" id="CHEBI:29105"/>
        <label>1</label>
    </ligand>
</feature>
<feature type="binding site" evidence="6 31">
    <location>
        <position position="447"/>
    </location>
    <ligand>
        <name>Zn(2+)</name>
        <dbReference type="ChEBI" id="CHEBI:29105"/>
        <label>2</label>
    </ligand>
</feature>
<feature type="binding site" evidence="6 31">
    <location>
        <position position="564"/>
    </location>
    <ligand>
        <name>AMP</name>
        <dbReference type="ChEBI" id="CHEBI:456215"/>
    </ligand>
</feature>
<feature type="binding site" evidence="5 6 7 8 9 12 28 29 30 31 32 33 34 35 36 37 38 39 40 41 42 43 45">
    <location>
        <position position="564"/>
    </location>
    <ligand>
        <name>Zn(2+)</name>
        <dbReference type="ChEBI" id="CHEBI:29105"/>
        <label>1</label>
    </ligand>
</feature>
<feature type="binding site" evidence="2">
    <location>
        <position position="615"/>
    </location>
    <ligand>
        <name>3',5'-cyclic AMP</name>
        <dbReference type="ChEBI" id="CHEBI:58165"/>
    </ligand>
</feature>
<feature type="binding site" evidence="6 7 31 32">
    <location>
        <position position="615"/>
    </location>
    <ligand>
        <name>AMP</name>
        <dbReference type="ChEBI" id="CHEBI:456215"/>
    </ligand>
</feature>
<feature type="binding site" evidence="2">
    <location>
        <position position="618"/>
    </location>
    <ligand>
        <name>3',5'-cyclic AMP</name>
        <dbReference type="ChEBI" id="CHEBI:58165"/>
    </ligand>
</feature>
<feature type="binding site" evidence="22 23 31 32">
    <location>
        <position position="618"/>
    </location>
    <ligand>
        <name>AMP</name>
        <dbReference type="ChEBI" id="CHEBI:456215"/>
    </ligand>
</feature>
<feature type="modified residue" description="Phosphoserine" evidence="1">
    <location>
        <position position="290"/>
    </location>
</feature>
<feature type="modified residue" description="Phosphoserine" evidence="1">
    <location>
        <position position="659"/>
    </location>
</feature>
<feature type="modified residue" description="Phosphoserine" evidence="1">
    <location>
        <position position="661"/>
    </location>
</feature>
<feature type="splice variant" id="VSP_004572" description="In isoform PDE4B2." evidence="17 18 19">
    <original>MKKSRSVMTVMADDNVKDYFECSLSKSYSSSSNTLGIDLWRGRRCCSGNLQLPPLSQRQSERARTPEGDGISRPTTLPLTTLPSIAITTVSQECFDVENGPSPGRSPLDPQASSSAGLVLHATFPGHSQRRESFLYRSDSDYDLSPKAMSRNSSLPSEQHGDDLIVTPFAQVLASLRSVRNNFTILTNLHGTSNKRSPAASQPPVSRVNPQ</original>
    <variation>MKEHGGTFSSTGISGGSGDSAMDSLQPLQPNYMPVCLFA</variation>
    <location>
        <begin position="1"/>
        <end position="211"/>
    </location>
</feature>
<feature type="splice variant" id="VSP_004571" description="In isoform PDE4B3." evidence="15 20">
    <original>MKKSRSVMTVMADDNVKDYFECSLSKSYSSSSNTLGIDLWRGRRCCSGNLQLPPLSQRQSERARTPEGDGISRPTTLPLTTLPSIAITTVSQE</original>
    <variation>MTAKDSSKELTASEPEVCIKTFKEQMHLELELPRLPGNRPTSPKISPRSSPRNSPCFFRKLLVNKSIRQRRRFTVAHT</variation>
    <location>
        <begin position="1"/>
        <end position="93"/>
    </location>
</feature>
<feature type="splice variant" id="VSP_047723" description="In isoform PDE4B5." evidence="15 16">
    <original>MKKSRSVMTVMADDN</original>
    <variation>MPEANYLLSVSWGYI</variation>
    <location>
        <begin position="1"/>
        <end position="15"/>
    </location>
</feature>
<feature type="splice variant" id="VSP_047724" description="In isoform PDE4B5." evidence="15 16">
    <location>
        <begin position="16"/>
        <end position="248"/>
    </location>
</feature>
<feature type="sequence variant" id="VAR_034373" description="In dbSNP:rs2227297.">
    <original>S</original>
    <variation>C</variation>
    <location>
        <position position="703"/>
    </location>
</feature>
<feature type="mutagenesis site" description="Increases substrate selectivity for cGMP." evidence="7">
    <original>NPTKSLELY</original>
    <variation>HPTKSLELH</variation>
    <location>
        <begin position="567"/>
        <end position="575"/>
    </location>
</feature>
<feature type="mutagenesis site" description="Changes substrate selectivity from cAMP-specific to dual cAMP and cGMP binding and hydrolysis; when associated with Q-575 and W-652." evidence="7">
    <original>N</original>
    <variation>A</variation>
    <location>
        <position position="567"/>
    </location>
</feature>
<feature type="mutagenesis site" description="Changes substrate selectivity from cAMP-specific to dual cAMP and cGMP binding and hydrolysis; when associated with A-567 and W-652." evidence="7">
    <original>Y</original>
    <variation>Q</variation>
    <location>
        <position position="575"/>
    </location>
</feature>
<feature type="mutagenesis site" description="Changes substrate selectivity from cAMP-specific to dual cAMP and cGMP binding and hydrolysis; when associated with A-567 and Q-575." evidence="7">
    <original>Y</original>
    <variation>W</variation>
    <location>
        <position position="652"/>
    </location>
</feature>
<feature type="helix" evidence="52">
    <location>
        <begin position="168"/>
        <end position="183"/>
    </location>
</feature>
<feature type="helix" evidence="52">
    <location>
        <begin position="217"/>
        <end position="235"/>
    </location>
</feature>
<feature type="helix" evidence="52">
    <location>
        <begin position="239"/>
        <end position="264"/>
    </location>
</feature>
<feature type="helix" evidence="52">
    <location>
        <begin position="266"/>
        <end position="279"/>
    </location>
</feature>
<feature type="helix" evidence="53">
    <location>
        <begin position="324"/>
        <end position="327"/>
    </location>
</feature>
<feature type="strand" evidence="53">
    <location>
        <begin position="328"/>
        <end position="330"/>
    </location>
</feature>
<feature type="turn" evidence="48">
    <location>
        <begin position="332"/>
        <end position="334"/>
    </location>
</feature>
<feature type="helix" evidence="51">
    <location>
        <begin position="335"/>
        <end position="342"/>
    </location>
</feature>
<feature type="turn" evidence="51">
    <location>
        <begin position="343"/>
        <end position="346"/>
    </location>
</feature>
<feature type="helix" evidence="51">
    <location>
        <begin position="352"/>
        <end position="358"/>
    </location>
</feature>
<feature type="turn" evidence="47">
    <location>
        <begin position="359"/>
        <end position="361"/>
    </location>
</feature>
<feature type="helix" evidence="51">
    <location>
        <begin position="363"/>
        <end position="374"/>
    </location>
</feature>
<feature type="helix" evidence="51">
    <location>
        <begin position="377"/>
        <end position="380"/>
    </location>
</feature>
<feature type="helix" evidence="51">
    <location>
        <begin position="385"/>
        <end position="397"/>
    </location>
</feature>
<feature type="strand" evidence="51">
    <location>
        <begin position="403"/>
        <end position="407"/>
    </location>
</feature>
<feature type="helix" evidence="51">
    <location>
        <begin position="408"/>
        <end position="422"/>
    </location>
</feature>
<feature type="helix" evidence="51">
    <location>
        <begin position="425"/>
        <end position="427"/>
    </location>
</feature>
<feature type="turn" evidence="51">
    <location>
        <begin position="428"/>
        <end position="430"/>
    </location>
</feature>
<feature type="helix" evidence="51">
    <location>
        <begin position="433"/>
        <end position="445"/>
    </location>
</feature>
<feature type="turn" evidence="51">
    <location>
        <begin position="446"/>
        <end position="449"/>
    </location>
</feature>
<feature type="helix" evidence="51">
    <location>
        <begin position="455"/>
        <end position="460"/>
    </location>
</feature>
<feature type="helix" evidence="51">
    <location>
        <begin position="464"/>
        <end position="468"/>
    </location>
</feature>
<feature type="turn" evidence="51">
    <location>
        <begin position="469"/>
        <end position="471"/>
    </location>
</feature>
<feature type="helix" evidence="51">
    <location>
        <begin position="474"/>
        <end position="486"/>
    </location>
</feature>
<feature type="helix" evidence="49">
    <location>
        <begin position="490"/>
        <end position="492"/>
    </location>
</feature>
<feature type="turn" evidence="51">
    <location>
        <begin position="494"/>
        <end position="497"/>
    </location>
</feature>
<feature type="helix" evidence="51">
    <location>
        <begin position="500"/>
        <end position="515"/>
    </location>
</feature>
<feature type="helix" evidence="51">
    <location>
        <begin position="519"/>
        <end position="521"/>
    </location>
</feature>
<feature type="helix" evidence="51">
    <location>
        <begin position="522"/>
        <end position="534"/>
    </location>
</feature>
<feature type="strand" evidence="54">
    <location>
        <begin position="542"/>
        <end position="544"/>
    </location>
</feature>
<feature type="helix" evidence="51">
    <location>
        <begin position="549"/>
        <end position="564"/>
    </location>
</feature>
<feature type="helix" evidence="51">
    <location>
        <begin position="567"/>
        <end position="569"/>
    </location>
</feature>
<feature type="helix" evidence="51">
    <location>
        <begin position="572"/>
        <end position="595"/>
    </location>
</feature>
<feature type="helix" evidence="49">
    <location>
        <begin position="602"/>
        <end position="604"/>
    </location>
</feature>
<feature type="turn" evidence="51">
    <location>
        <begin position="606"/>
        <end position="608"/>
    </location>
</feature>
<feature type="helix" evidence="51">
    <location>
        <begin position="611"/>
        <end position="621"/>
    </location>
</feature>
<feature type="helix" evidence="51">
    <location>
        <begin position="623"/>
        <end position="633"/>
    </location>
</feature>
<feature type="turn" evidence="51">
    <location>
        <begin position="634"/>
        <end position="638"/>
    </location>
</feature>
<feature type="helix" evidence="51">
    <location>
        <begin position="639"/>
        <end position="654"/>
    </location>
</feature>
<feature type="strand" evidence="47">
    <location>
        <begin position="656"/>
        <end position="658"/>
    </location>
</feature>
<feature type="strand" evidence="50">
    <location>
        <begin position="659"/>
        <end position="662"/>
    </location>
</feature>
<feature type="helix" evidence="50">
    <location>
        <begin position="664"/>
        <end position="666"/>
    </location>
</feature>
<feature type="helix" evidence="46">
    <location>
        <begin position="671"/>
        <end position="677"/>
    </location>
</feature>
<gene>
    <name evidence="27" type="primary">PDE4B</name>
    <name type="synonym">DPDE4</name>
</gene>
<accession>Q07343</accession>
<accession>A5YW33</accession>
<accession>O15443</accession>
<accession>Q13945</accession>
<accession>Q5TEK4</accession>
<accession>Q5TEK5</accession>
<accession>Q5TEK6</accession>
<keyword id="KW-0002">3D-structure</keyword>
<keyword id="KW-0025">Alternative splicing</keyword>
<keyword id="KW-0114">cAMP</keyword>
<keyword id="KW-1003">Cell membrane</keyword>
<keyword id="KW-0963">Cytoplasm</keyword>
<keyword id="KW-0378">Hydrolase</keyword>
<keyword id="KW-0472">Membrane</keyword>
<keyword id="KW-0479">Metal-binding</keyword>
<keyword id="KW-0597">Phosphoprotein</keyword>
<keyword id="KW-1267">Proteomics identification</keyword>
<keyword id="KW-1185">Reference proteome</keyword>
<keyword id="KW-0862">Zinc</keyword>
<sequence>MKKSRSVMTVMADDNVKDYFECSLSKSYSSSSNTLGIDLWRGRRCCSGNLQLPPLSQRQSERARTPEGDGISRPTTLPLTTLPSIAITTVSQECFDVENGPSPGRSPLDPQASSSAGLVLHATFPGHSQRRESFLYRSDSDYDLSPKAMSRNSSLPSEQHGDDLIVTPFAQVLASLRSVRNNFTILTNLHGTSNKRSPAASQPPVSRVNPQEESYQKLAMETLEELDWCLDQLETIQTYRSVSEMASNKFKRMLNRELTHLSEMSRSGNQVSEYISNTFLDKQNDVEIPSPTQKDREKKKKQQLMTQISGVKKLMHSSSLNNTSISRFGVNTENEDHLAKELEDLNKWGLNIFNVAGYSHNRPLTCIMYAIFQERDLLKTFRISSDTFITYMMTLEDHYHSDVAYHNSLHAADVAQSTHVLLSTPALDAVFTDLEILAAIFAAAIHDVDHPGVSNQFLINTNSELALMYNDESVLENHHLAVGFKLLQEEHCDIFMNLTKKQRQTLRKMVIDMVLATDMSKHMSLLADLKTMVETKKVTSSGVLLLDNYTDRIQVLRNMVHCADLSNPTKSLELYRQWTDRIMEEFFQQGDKERERGMEISPMCDKHTASVEKSQVGFIDYIVHPLWETWADLVQPDAQDILDTLEDNRNWYQSMIPQSPSPPLDEQNRDCQGLMEKFQFELTLDEEDSEGPEKEGEGHSYFSSTKTLCVIDPENRDSLGETDIDIATEDKSPVDT</sequence>
<evidence type="ECO:0000250" key="1">
    <source>
        <dbReference type="UniProtKB" id="P14646"/>
    </source>
</evidence>
<evidence type="ECO:0000250" key="2">
    <source>
        <dbReference type="UniProtKB" id="Q08499"/>
    </source>
</evidence>
<evidence type="ECO:0000255" key="3">
    <source>
        <dbReference type="PROSITE-ProRule" id="PRU01192"/>
    </source>
</evidence>
<evidence type="ECO:0000256" key="4">
    <source>
        <dbReference type="SAM" id="MobiDB-lite"/>
    </source>
</evidence>
<evidence type="ECO:0000269" key="5">
    <source>
    </source>
</evidence>
<evidence type="ECO:0000269" key="6">
    <source>
    </source>
</evidence>
<evidence type="ECO:0000269" key="7">
    <source>
    </source>
</evidence>
<evidence type="ECO:0000269" key="8">
    <source>
    </source>
</evidence>
<evidence type="ECO:0000269" key="9">
    <source>
    </source>
</evidence>
<evidence type="ECO:0000269" key="10">
    <source>
    </source>
</evidence>
<evidence type="ECO:0000269" key="11">
    <source>
    </source>
</evidence>
<evidence type="ECO:0000269" key="12">
    <source>
    </source>
</evidence>
<evidence type="ECO:0000269" key="13">
    <source>
    </source>
</evidence>
<evidence type="ECO:0000269" key="14">
    <source>
    </source>
</evidence>
<evidence type="ECO:0000303" key="15">
    <source>
    </source>
</evidence>
<evidence type="ECO:0000303" key="16">
    <source>
    </source>
</evidence>
<evidence type="ECO:0000303" key="17">
    <source>
    </source>
</evidence>
<evidence type="ECO:0000303" key="18">
    <source>
    </source>
</evidence>
<evidence type="ECO:0000303" key="19">
    <source>
    </source>
</evidence>
<evidence type="ECO:0000303" key="20">
    <source>
    </source>
</evidence>
<evidence type="ECO:0000305" key="21"/>
<evidence type="ECO:0000305" key="22">
    <source>
    </source>
</evidence>
<evidence type="ECO:0000305" key="23">
    <source>
    </source>
</evidence>
<evidence type="ECO:0000305" key="24">
    <source>
    </source>
</evidence>
<evidence type="ECO:0000305" key="25">
    <source>
    </source>
</evidence>
<evidence type="ECO:0000305" key="26">
    <source>
    </source>
</evidence>
<evidence type="ECO:0000312" key="27">
    <source>
        <dbReference type="HGNC" id="HGNC:8781"/>
    </source>
</evidence>
<evidence type="ECO:0007744" key="28">
    <source>
        <dbReference type="PDB" id="1F0J"/>
    </source>
</evidence>
<evidence type="ECO:0007744" key="29">
    <source>
        <dbReference type="PDB" id="1RO6"/>
    </source>
</evidence>
<evidence type="ECO:0007744" key="30">
    <source>
        <dbReference type="PDB" id="1RO9"/>
    </source>
</evidence>
<evidence type="ECO:0007744" key="31">
    <source>
        <dbReference type="PDB" id="1ROR"/>
    </source>
</evidence>
<evidence type="ECO:0007744" key="32">
    <source>
        <dbReference type="PDB" id="1TB5"/>
    </source>
</evidence>
<evidence type="ECO:0007744" key="33">
    <source>
        <dbReference type="PDB" id="1XLX"/>
    </source>
</evidence>
<evidence type="ECO:0007744" key="34">
    <source>
        <dbReference type="PDB" id="1XLZ"/>
    </source>
</evidence>
<evidence type="ECO:0007744" key="35">
    <source>
        <dbReference type="PDB" id="1XM4"/>
    </source>
</evidence>
<evidence type="ECO:0007744" key="36">
    <source>
        <dbReference type="PDB" id="1XM6"/>
    </source>
</evidence>
<evidence type="ECO:0007744" key="37">
    <source>
        <dbReference type="PDB" id="1XMU"/>
    </source>
</evidence>
<evidence type="ECO:0007744" key="38">
    <source>
        <dbReference type="PDB" id="1XMY"/>
    </source>
</evidence>
<evidence type="ECO:0007744" key="39">
    <source>
        <dbReference type="PDB" id="1XN0"/>
    </source>
</evidence>
<evidence type="ECO:0007744" key="40">
    <source>
        <dbReference type="PDB" id="1XOS"/>
    </source>
</evidence>
<evidence type="ECO:0007744" key="41">
    <source>
        <dbReference type="PDB" id="1XOT"/>
    </source>
</evidence>
<evidence type="ECO:0007744" key="42">
    <source>
        <dbReference type="PDB" id="1Y2H"/>
    </source>
</evidence>
<evidence type="ECO:0007744" key="43">
    <source>
        <dbReference type="PDB" id="1Y2J"/>
    </source>
</evidence>
<evidence type="ECO:0007744" key="44">
    <source>
        <dbReference type="PDB" id="2QYL"/>
    </source>
</evidence>
<evidence type="ECO:0007744" key="45">
    <source>
        <dbReference type="PDB" id="3D3P"/>
    </source>
</evidence>
<evidence type="ECO:0007829" key="46">
    <source>
        <dbReference type="PDB" id="1F0J"/>
    </source>
</evidence>
<evidence type="ECO:0007829" key="47">
    <source>
        <dbReference type="PDB" id="1RO6"/>
    </source>
</evidence>
<evidence type="ECO:0007829" key="48">
    <source>
        <dbReference type="PDB" id="1XMU"/>
    </source>
</evidence>
<evidence type="ECO:0007829" key="49">
    <source>
        <dbReference type="PDB" id="3FRG"/>
    </source>
</evidence>
<evidence type="ECO:0007829" key="50">
    <source>
        <dbReference type="PDB" id="3KKT"/>
    </source>
</evidence>
<evidence type="ECO:0007829" key="51">
    <source>
        <dbReference type="PDB" id="4KP6"/>
    </source>
</evidence>
<evidence type="ECO:0007829" key="52">
    <source>
        <dbReference type="PDB" id="4WZI"/>
    </source>
</evidence>
<evidence type="ECO:0007829" key="53">
    <source>
        <dbReference type="PDB" id="5OHJ"/>
    </source>
</evidence>
<evidence type="ECO:0007829" key="54">
    <source>
        <dbReference type="PDB" id="8OEG"/>
    </source>
</evidence>
<dbReference type="EC" id="3.1.4.53" evidence="7 10 13 14"/>
<dbReference type="EMBL" id="L12686">
    <property type="protein sequence ID" value="AAA35643.1"/>
    <property type="status" value="ALT_INIT"/>
    <property type="molecule type" value="mRNA"/>
</dbReference>
<dbReference type="EMBL" id="L20966">
    <property type="protein sequence ID" value="AAA03589.1"/>
    <property type="molecule type" value="mRNA"/>
</dbReference>
<dbReference type="EMBL" id="L20971">
    <property type="protein sequence ID" value="AAA03593.1"/>
    <property type="molecule type" value="mRNA"/>
</dbReference>
<dbReference type="EMBL" id="U85048">
    <property type="protein sequence ID" value="AAB96381.1"/>
    <property type="molecule type" value="mRNA"/>
</dbReference>
<dbReference type="EMBL" id="M97515">
    <property type="protein sequence ID" value="AAA36426.1"/>
    <property type="molecule type" value="mRNA"/>
</dbReference>
<dbReference type="EMBL" id="EF595686">
    <property type="protein sequence ID" value="ABQ85407.1"/>
    <property type="molecule type" value="mRNA"/>
</dbReference>
<dbReference type="EMBL" id="AK289969">
    <property type="protein sequence ID" value="BAF82658.1"/>
    <property type="molecule type" value="mRNA"/>
</dbReference>
<dbReference type="EMBL" id="AK290006">
    <property type="protein sequence ID" value="BAF82695.1"/>
    <property type="molecule type" value="mRNA"/>
</dbReference>
<dbReference type="EMBL" id="AK290206">
    <property type="protein sequence ID" value="BAF82895.1"/>
    <property type="molecule type" value="mRNA"/>
</dbReference>
<dbReference type="EMBL" id="AL592285">
    <property type="status" value="NOT_ANNOTATED_CDS"/>
    <property type="molecule type" value="Genomic_DNA"/>
</dbReference>
<dbReference type="EMBL" id="AL357273">
    <property type="status" value="NOT_ANNOTATED_CDS"/>
    <property type="molecule type" value="Genomic_DNA"/>
</dbReference>
<dbReference type="EMBL" id="AL109926">
    <property type="status" value="NOT_ANNOTATED_CDS"/>
    <property type="molecule type" value="Genomic_DNA"/>
</dbReference>
<dbReference type="EMBL" id="AL359701">
    <property type="status" value="NOT_ANNOTATED_CDS"/>
    <property type="molecule type" value="Genomic_DNA"/>
</dbReference>
<dbReference type="EMBL" id="AL513493">
    <property type="status" value="NOT_ANNOTATED_CDS"/>
    <property type="molecule type" value="Genomic_DNA"/>
</dbReference>
<dbReference type="EMBL" id="AL590783">
    <property type="status" value="NOT_ANNOTATED_CDS"/>
    <property type="molecule type" value="Genomic_DNA"/>
</dbReference>
<dbReference type="EMBL" id="AL591487">
    <property type="status" value="NOT_ANNOTATED_CDS"/>
    <property type="molecule type" value="Genomic_DNA"/>
</dbReference>
<dbReference type="EMBL" id="CH471059">
    <property type="protein sequence ID" value="EAX06524.1"/>
    <property type="molecule type" value="Genomic_DNA"/>
</dbReference>
<dbReference type="EMBL" id="BC101480">
    <property type="protein sequence ID" value="AAI01481.1"/>
    <property type="molecule type" value="mRNA"/>
</dbReference>
<dbReference type="EMBL" id="BC105040">
    <property type="protein sequence ID" value="AAI05041.1"/>
    <property type="molecule type" value="mRNA"/>
</dbReference>
<dbReference type="CCDS" id="CCDS30742.1">
    <molecule id="Q07343-3"/>
</dbReference>
<dbReference type="CCDS" id="CCDS30743.1">
    <molecule id="Q07343-2"/>
</dbReference>
<dbReference type="CCDS" id="CCDS632.1">
    <molecule id="Q07343-1"/>
</dbReference>
<dbReference type="CCDS" id="CCDS72802.1">
    <molecule id="Q07343-4"/>
</dbReference>
<dbReference type="PIR" id="I61354">
    <property type="entry name" value="I61354"/>
</dbReference>
<dbReference type="RefSeq" id="NP_001032416.1">
    <molecule id="Q07343-2"/>
    <property type="nucleotide sequence ID" value="NM_001037339.2"/>
</dbReference>
<dbReference type="RefSeq" id="NP_001032417.1">
    <molecule id="Q07343-3"/>
    <property type="nucleotide sequence ID" value="NM_001037340.3"/>
</dbReference>
<dbReference type="RefSeq" id="NP_001032418.1">
    <molecule id="Q07343-1"/>
    <property type="nucleotide sequence ID" value="NM_001037341.2"/>
</dbReference>
<dbReference type="RefSeq" id="NP_001284369.1">
    <property type="nucleotide sequence ID" value="NM_001297440.1"/>
</dbReference>
<dbReference type="RefSeq" id="NP_001284370.1">
    <property type="nucleotide sequence ID" value="NM_001297441.1"/>
</dbReference>
<dbReference type="RefSeq" id="NP_001284371.1">
    <molecule id="Q07343-4"/>
    <property type="nucleotide sequence ID" value="NM_001297442.2"/>
</dbReference>
<dbReference type="RefSeq" id="NP_002591.2">
    <molecule id="Q07343-1"/>
    <property type="nucleotide sequence ID" value="NM_002600.3"/>
</dbReference>
<dbReference type="PDB" id="1F0J">
    <property type="method" value="X-ray"/>
    <property type="resolution" value="1.77 A"/>
    <property type="chains" value="A/B=324-700"/>
</dbReference>
<dbReference type="PDB" id="1RO6">
    <property type="method" value="X-ray"/>
    <property type="resolution" value="2.00 A"/>
    <property type="chains" value="A/B=324-700"/>
</dbReference>
<dbReference type="PDB" id="1RO9">
    <property type="method" value="X-ray"/>
    <property type="resolution" value="2.13 A"/>
    <property type="chains" value="A/B=324-700"/>
</dbReference>
<dbReference type="PDB" id="1ROR">
    <property type="method" value="X-ray"/>
    <property type="resolution" value="2.00 A"/>
    <property type="chains" value="A/B=324-700"/>
</dbReference>
<dbReference type="PDB" id="1TB5">
    <property type="method" value="X-ray"/>
    <property type="resolution" value="2.15 A"/>
    <property type="chains" value="A/B=324-700"/>
</dbReference>
<dbReference type="PDB" id="1XLX">
    <property type="method" value="X-ray"/>
    <property type="resolution" value="2.19 A"/>
    <property type="chains" value="A/B=324-700"/>
</dbReference>
<dbReference type="PDB" id="1XLZ">
    <property type="method" value="X-ray"/>
    <property type="resolution" value="2.06 A"/>
    <property type="chains" value="A/B=324-700"/>
</dbReference>
<dbReference type="PDB" id="1XM4">
    <property type="method" value="X-ray"/>
    <property type="resolution" value="2.31 A"/>
    <property type="chains" value="A/B=324-700"/>
</dbReference>
<dbReference type="PDB" id="1XM6">
    <property type="method" value="X-ray"/>
    <property type="resolution" value="1.92 A"/>
    <property type="chains" value="A/B=324-700"/>
</dbReference>
<dbReference type="PDB" id="1XMU">
    <property type="method" value="X-ray"/>
    <property type="resolution" value="2.30 A"/>
    <property type="chains" value="A/B=324-700"/>
</dbReference>
<dbReference type="PDB" id="1XMY">
    <property type="method" value="X-ray"/>
    <property type="resolution" value="2.40 A"/>
    <property type="chains" value="A/B=324-700"/>
</dbReference>
<dbReference type="PDB" id="1XN0">
    <property type="method" value="X-ray"/>
    <property type="resolution" value="2.31 A"/>
    <property type="chains" value="A/B=324-700"/>
</dbReference>
<dbReference type="PDB" id="1XOS">
    <property type="method" value="X-ray"/>
    <property type="resolution" value="2.28 A"/>
    <property type="chains" value="A=324-700"/>
</dbReference>
<dbReference type="PDB" id="1XOT">
    <property type="method" value="X-ray"/>
    <property type="resolution" value="2.34 A"/>
    <property type="chains" value="A/B=324-700"/>
</dbReference>
<dbReference type="PDB" id="1Y2H">
    <property type="method" value="X-ray"/>
    <property type="resolution" value="2.40 A"/>
    <property type="chains" value="A/B=324-700"/>
</dbReference>
<dbReference type="PDB" id="1Y2J">
    <property type="method" value="X-ray"/>
    <property type="resolution" value="2.55 A"/>
    <property type="chains" value="A/B=324-700"/>
</dbReference>
<dbReference type="PDB" id="2CHM">
    <property type="method" value="X-ray"/>
    <property type="resolution" value="1.60 A"/>
    <property type="chains" value="A=450-475"/>
</dbReference>
<dbReference type="PDB" id="2QYL">
    <property type="method" value="X-ray"/>
    <property type="resolution" value="1.95 A"/>
    <property type="chains" value="A=324-659"/>
</dbReference>
<dbReference type="PDB" id="3D3P">
    <property type="method" value="X-ray"/>
    <property type="resolution" value="1.75 A"/>
    <property type="chains" value="A=324-675"/>
</dbReference>
<dbReference type="PDB" id="3FRG">
    <property type="method" value="X-ray"/>
    <property type="resolution" value="1.70 A"/>
    <property type="chains" value="A=324-675"/>
</dbReference>
<dbReference type="PDB" id="3G45">
    <property type="method" value="X-ray"/>
    <property type="resolution" value="2.63 A"/>
    <property type="chains" value="A/B=241-289, A/B=305-659"/>
</dbReference>
<dbReference type="PDB" id="3GWT">
    <property type="method" value="X-ray"/>
    <property type="resolution" value="1.75 A"/>
    <property type="chains" value="A=324-675"/>
</dbReference>
<dbReference type="PDB" id="3HC8">
    <property type="method" value="X-ray"/>
    <property type="resolution" value="1.79 A"/>
    <property type="chains" value="A=451-474"/>
</dbReference>
<dbReference type="PDB" id="3HDZ">
    <property type="method" value="X-ray"/>
    <property type="resolution" value="1.80 A"/>
    <property type="chains" value="A=451-474"/>
</dbReference>
<dbReference type="PDB" id="3HMV">
    <property type="method" value="X-ray"/>
    <property type="resolution" value="2.23 A"/>
    <property type="chains" value="A/B=324-700"/>
</dbReference>
<dbReference type="PDB" id="3KKT">
    <property type="method" value="X-ray"/>
    <property type="resolution" value="2.48 A"/>
    <property type="chains" value="A/B=324-700"/>
</dbReference>
<dbReference type="PDB" id="3LY2">
    <property type="method" value="X-ray"/>
    <property type="resolution" value="2.60 A"/>
    <property type="chains" value="A/B/C/D/E/F/G/H=324-659"/>
</dbReference>
<dbReference type="PDB" id="3O0J">
    <property type="method" value="X-ray"/>
    <property type="resolution" value="1.95 A"/>
    <property type="chains" value="A=334-656"/>
</dbReference>
<dbReference type="PDB" id="3O56">
    <property type="method" value="X-ray"/>
    <property type="resolution" value="2.42 A"/>
    <property type="chains" value="A=324-675"/>
</dbReference>
<dbReference type="PDB" id="3O57">
    <property type="method" value="X-ray"/>
    <property type="resolution" value="2.00 A"/>
    <property type="chains" value="A=324-675"/>
</dbReference>
<dbReference type="PDB" id="3W5E">
    <property type="method" value="X-ray"/>
    <property type="resolution" value="2.30 A"/>
    <property type="chains" value="A/B=324-700"/>
</dbReference>
<dbReference type="PDB" id="3WD9">
    <property type="method" value="X-ray"/>
    <property type="resolution" value="2.50 A"/>
    <property type="chains" value="A/B=324-700"/>
</dbReference>
<dbReference type="PDB" id="4KP6">
    <property type="method" value="X-ray"/>
    <property type="resolution" value="1.50 A"/>
    <property type="chains" value="A=324-659"/>
</dbReference>
<dbReference type="PDB" id="4MYQ">
    <property type="method" value="X-ray"/>
    <property type="resolution" value="1.90 A"/>
    <property type="chains" value="A=324-691"/>
</dbReference>
<dbReference type="PDB" id="4NW7">
    <property type="method" value="X-ray"/>
    <property type="resolution" value="2.15 A"/>
    <property type="chains" value="A=324-691"/>
</dbReference>
<dbReference type="PDB" id="4WZI">
    <property type="method" value="X-ray"/>
    <property type="resolution" value="2.58 A"/>
    <property type="chains" value="A/B=122-736"/>
</dbReference>
<dbReference type="PDB" id="4X0F">
    <property type="method" value="X-ray"/>
    <property type="resolution" value="3.22 A"/>
    <property type="chains" value="A/B=122-736"/>
</dbReference>
<dbReference type="PDB" id="5K6J">
    <property type="method" value="X-ray"/>
    <property type="resolution" value="1.86 A"/>
    <property type="chains" value="A=334-656"/>
</dbReference>
<dbReference type="PDB" id="5LAQ">
    <property type="method" value="X-ray"/>
    <property type="resolution" value="2.40 A"/>
    <property type="chains" value="A=241-289, A=305-659"/>
</dbReference>
<dbReference type="PDB" id="5OHJ">
    <property type="method" value="X-ray"/>
    <property type="resolution" value="1.60 A"/>
    <property type="chains" value="A/B=241-659"/>
</dbReference>
<dbReference type="PDB" id="6BOJ">
    <property type="method" value="X-ray"/>
    <property type="resolution" value="1.70 A"/>
    <property type="chains" value="A/B/C/D=663-673"/>
</dbReference>
<dbReference type="PDB" id="8OEG">
    <property type="method" value="X-ray"/>
    <property type="resolution" value="1.89 A"/>
    <property type="chains" value="A=241-659"/>
</dbReference>
<dbReference type="PDBsum" id="1F0J"/>
<dbReference type="PDBsum" id="1RO6"/>
<dbReference type="PDBsum" id="1RO9"/>
<dbReference type="PDBsum" id="1ROR"/>
<dbReference type="PDBsum" id="1TB5"/>
<dbReference type="PDBsum" id="1XLX"/>
<dbReference type="PDBsum" id="1XLZ"/>
<dbReference type="PDBsum" id="1XM4"/>
<dbReference type="PDBsum" id="1XM6"/>
<dbReference type="PDBsum" id="1XMU"/>
<dbReference type="PDBsum" id="1XMY"/>
<dbReference type="PDBsum" id="1XN0"/>
<dbReference type="PDBsum" id="1XOS"/>
<dbReference type="PDBsum" id="1XOT"/>
<dbReference type="PDBsum" id="1Y2H"/>
<dbReference type="PDBsum" id="1Y2J"/>
<dbReference type="PDBsum" id="2CHM"/>
<dbReference type="PDBsum" id="2QYL"/>
<dbReference type="PDBsum" id="3D3P"/>
<dbReference type="PDBsum" id="3FRG"/>
<dbReference type="PDBsum" id="3G45"/>
<dbReference type="PDBsum" id="3GWT"/>
<dbReference type="PDBsum" id="3HC8"/>
<dbReference type="PDBsum" id="3HDZ"/>
<dbReference type="PDBsum" id="3HMV"/>
<dbReference type="PDBsum" id="3KKT"/>
<dbReference type="PDBsum" id="3LY2"/>
<dbReference type="PDBsum" id="3O0J"/>
<dbReference type="PDBsum" id="3O56"/>
<dbReference type="PDBsum" id="3O57"/>
<dbReference type="PDBsum" id="3W5E"/>
<dbReference type="PDBsum" id="3WD9"/>
<dbReference type="PDBsum" id="4KP6"/>
<dbReference type="PDBsum" id="4MYQ"/>
<dbReference type="PDBsum" id="4NW7"/>
<dbReference type="PDBsum" id="4WZI"/>
<dbReference type="PDBsum" id="4X0F"/>
<dbReference type="PDBsum" id="5K6J"/>
<dbReference type="PDBsum" id="5LAQ"/>
<dbReference type="PDBsum" id="5OHJ"/>
<dbReference type="PDBsum" id="6BOJ"/>
<dbReference type="PDBsum" id="8OEG"/>
<dbReference type="SMR" id="Q07343"/>
<dbReference type="BioGRID" id="111168">
    <property type="interactions" value="66"/>
</dbReference>
<dbReference type="CORUM" id="Q07343"/>
<dbReference type="ELM" id="Q07343"/>
<dbReference type="FunCoup" id="Q07343">
    <property type="interactions" value="1509"/>
</dbReference>
<dbReference type="IntAct" id="Q07343">
    <property type="interactions" value="9"/>
</dbReference>
<dbReference type="STRING" id="9606.ENSP00000342637"/>
<dbReference type="BindingDB" id="Q07343"/>
<dbReference type="ChEMBL" id="CHEMBL275"/>
<dbReference type="DrugBank" id="DB04149">
    <property type="generic name" value="(R)-Rolipram"/>
</dbReference>
<dbReference type="DrugBank" id="DB03606">
    <property type="generic name" value="(S)-Rolipram"/>
</dbReference>
<dbReference type="DrugBank" id="DB03807">
    <property type="generic name" value="1-(2-Chlorophenyl)-3,5-Dimethyl-1h-Pyrazole-4-Carboxylic Acid Ethyl Ester"/>
</dbReference>
<dbReference type="DrugBank" id="DB06909">
    <property type="generic name" value="1-ethyl-N-(phenylmethyl)-4-(tetrahydro-2H-pyran-4-ylamino)-1H-pyrazolo[3,4-b]pyridine-5-carboxamide"/>
</dbReference>
<dbReference type="DrugBank" id="DB01959">
    <property type="generic name" value="3,5-Dimethyl-1-(3-Nitrophenyl)-1h-Pyrazole-4-Carboxylic Acid Ethyl Ester"/>
</dbReference>
<dbReference type="DrugBank" id="DB07954">
    <property type="generic name" value="3-isobutyl-1-methyl-7H-xanthine"/>
</dbReference>
<dbReference type="DrugBank" id="DB08299">
    <property type="generic name" value="4-[8-(3-nitrophenyl)-1,7-naphthyridin-6-yl]benzoic acid"/>
</dbReference>
<dbReference type="DrugBank" id="DB03349">
    <property type="generic name" value="8-Bromo-Adenosine-5'-Monophosphate"/>
</dbReference>
<dbReference type="DrugBank" id="DB00131">
    <property type="generic name" value="Adenosine phosphate"/>
</dbReference>
<dbReference type="DrugBank" id="DB01427">
    <property type="generic name" value="Amrinone"/>
</dbReference>
<dbReference type="DrugBank" id="DB16039">
    <property type="generic name" value="AN2898"/>
</dbReference>
<dbReference type="DrugBank" id="DB00201">
    <property type="generic name" value="Caffeine"/>
</dbReference>
<dbReference type="DrugBank" id="DB15640">
    <property type="generic name" value="CDC-801"/>
</dbReference>
<dbReference type="DrugBank" id="DB03849">
    <property type="generic name" value="Cilomilast"/>
</dbReference>
<dbReference type="DrugBank" id="DB05219">
    <property type="generic name" value="Crisaborole"/>
</dbReference>
<dbReference type="DrugBank" id="DB01647">
    <property type="generic name" value="Daxalipram"/>
</dbReference>
<dbReference type="DrugBank" id="DB00651">
    <property type="generic name" value="Dyphylline"/>
</dbReference>
<dbReference type="DrugBank" id="DB00824">
    <property type="generic name" value="Enprofylline"/>
</dbReference>
<dbReference type="DrugBank" id="DB16157">
    <property type="generic name" value="Ensifentrine"/>
</dbReference>
<dbReference type="DrugBank" id="DB02660">
    <property type="generic name" value="Filaminast"/>
</dbReference>
<dbReference type="DrugBank" id="DB12542">
    <property type="generic name" value="GSK-356278"/>
</dbReference>
<dbReference type="DrugBank" id="DB11650">
    <property type="generic name" value="HT-0712"/>
</dbReference>
<dbReference type="DrugBank" id="DB05266">
    <property type="generic name" value="Ibudilast"/>
</dbReference>
<dbReference type="DrugBank" id="DB01088">
    <property type="generic name" value="Iloprost"/>
</dbReference>
<dbReference type="DrugBank" id="DB13029">
    <property type="generic name" value="MK-0873"/>
</dbReference>
<dbReference type="DrugBank" id="DB12375">
    <property type="generic name" value="Oglemilast"/>
</dbReference>
<dbReference type="DrugBank" id="DB01113">
    <property type="generic name" value="Papaverine"/>
</dbReference>
<dbReference type="DrugBank" id="DB01791">
    <property type="generic name" value="Piclamilast"/>
</dbReference>
<dbReference type="DrugBank" id="DB11838">
    <property type="generic name" value="Revamilast"/>
</dbReference>
<dbReference type="DrugBank" id="DB01656">
    <property type="generic name" value="Roflumilast"/>
</dbReference>
<dbReference type="DrugBank" id="DB01954">
    <property type="generic name" value="Rolipram"/>
</dbReference>
<dbReference type="DrugBank" id="DB04530">
    <property type="generic name" value="S,S-(2-Hydroxyethyl)Thiocysteine"/>
</dbReference>
<dbReference type="DrugBank" id="DB01412">
    <property type="generic name" value="Theobromine"/>
</dbReference>
<dbReference type="DrugBank" id="DB00277">
    <property type="generic name" value="Theophylline"/>
</dbReference>
<dbReference type="DrugBank" id="DB11681">
    <property type="generic name" value="Tofimilast"/>
</dbReference>
<dbReference type="DrugBank" id="DB09283">
    <property type="generic name" value="Trapidil"/>
</dbReference>
<dbReference type="DrugCentral" id="Q07343"/>
<dbReference type="GuidetoPHARMACOLOGY" id="1301"/>
<dbReference type="GlyGen" id="Q07343">
    <property type="glycosylation" value="3 sites, 1 N-linked glycan (2 sites), 1 O-linked glycan (1 site)"/>
</dbReference>
<dbReference type="iPTMnet" id="Q07343"/>
<dbReference type="PhosphoSitePlus" id="Q07343"/>
<dbReference type="SwissPalm" id="Q07343"/>
<dbReference type="BioMuta" id="PDE4B"/>
<dbReference type="DMDM" id="729163"/>
<dbReference type="jPOST" id="Q07343"/>
<dbReference type="MassIVE" id="Q07343"/>
<dbReference type="PaxDb" id="9606-ENSP00000332116"/>
<dbReference type="PeptideAtlas" id="Q07343"/>
<dbReference type="ProteomicsDB" id="58512">
    <molecule id="Q07343-1"/>
</dbReference>
<dbReference type="ProteomicsDB" id="58513">
    <molecule id="Q07343-2"/>
</dbReference>
<dbReference type="ProteomicsDB" id="58514">
    <molecule id="Q07343-3"/>
</dbReference>
<dbReference type="ProteomicsDB" id="65061"/>
<dbReference type="ProteomicsDB" id="768"/>
<dbReference type="Pumba" id="Q07343"/>
<dbReference type="Antibodypedia" id="1172">
    <property type="antibodies" value="540 antibodies from 34 providers"/>
</dbReference>
<dbReference type="DNASU" id="5142"/>
<dbReference type="Ensembl" id="ENST00000329654.8">
    <molecule id="Q07343-1"/>
    <property type="protein sequence ID" value="ENSP00000332116.4"/>
    <property type="gene ID" value="ENSG00000184588.18"/>
</dbReference>
<dbReference type="Ensembl" id="ENST00000341517.9">
    <molecule id="Q07343-1"/>
    <property type="protein sequence ID" value="ENSP00000342637.4"/>
    <property type="gene ID" value="ENSG00000184588.18"/>
</dbReference>
<dbReference type="Ensembl" id="ENST00000371045.9">
    <molecule id="Q07343-2"/>
    <property type="protein sequence ID" value="ENSP00000360084.5"/>
    <property type="gene ID" value="ENSG00000184588.18"/>
</dbReference>
<dbReference type="Ensembl" id="ENST00000423207.6">
    <molecule id="Q07343-3"/>
    <property type="protein sequence ID" value="ENSP00000392947.2"/>
    <property type="gene ID" value="ENSG00000184588.18"/>
</dbReference>
<dbReference type="Ensembl" id="ENST00000480109.2">
    <molecule id="Q07343-4"/>
    <property type="protein sequence ID" value="ENSP00000432592.1"/>
    <property type="gene ID" value="ENSG00000184588.18"/>
</dbReference>
<dbReference type="GeneID" id="5142"/>
<dbReference type="KEGG" id="hsa:5142"/>
<dbReference type="MANE-Select" id="ENST00000341517.9">
    <property type="protein sequence ID" value="ENSP00000342637.4"/>
    <property type="RefSeq nucleotide sequence ID" value="NM_002600.4"/>
    <property type="RefSeq protein sequence ID" value="NP_002591.2"/>
</dbReference>
<dbReference type="UCSC" id="uc001dcp.4">
    <molecule id="Q07343-1"/>
    <property type="organism name" value="human"/>
</dbReference>
<dbReference type="AGR" id="HGNC:8781"/>
<dbReference type="CTD" id="5142"/>
<dbReference type="DisGeNET" id="5142"/>
<dbReference type="GeneCards" id="PDE4B"/>
<dbReference type="HGNC" id="HGNC:8781">
    <property type="gene designation" value="PDE4B"/>
</dbReference>
<dbReference type="HPA" id="ENSG00000184588">
    <property type="expression patterns" value="Tissue enhanced (bone)"/>
</dbReference>
<dbReference type="MalaCards" id="PDE4B"/>
<dbReference type="MIM" id="600127">
    <property type="type" value="gene"/>
</dbReference>
<dbReference type="neXtProt" id="NX_Q07343"/>
<dbReference type="OpenTargets" id="ENSG00000184588"/>
<dbReference type="PharmGKB" id="PA33129"/>
<dbReference type="VEuPathDB" id="HostDB:ENSG00000184588"/>
<dbReference type="eggNOG" id="KOG3689">
    <property type="taxonomic scope" value="Eukaryota"/>
</dbReference>
<dbReference type="GeneTree" id="ENSGT00940000155190"/>
<dbReference type="HOGENOM" id="CLU_005940_5_3_1"/>
<dbReference type="InParanoid" id="Q07343"/>
<dbReference type="OMA" id="MMKERCG"/>
<dbReference type="OrthoDB" id="189220at2759"/>
<dbReference type="PAN-GO" id="Q07343">
    <property type="GO annotations" value="6 GO annotations based on evolutionary models"/>
</dbReference>
<dbReference type="PhylomeDB" id="Q07343"/>
<dbReference type="TreeFam" id="TF314638"/>
<dbReference type="BRENDA" id="3.1.4.53">
    <property type="organism ID" value="2681"/>
</dbReference>
<dbReference type="PathwayCommons" id="Q07343"/>
<dbReference type="Reactome" id="R-HSA-180024">
    <molecule id="Q07343-3"/>
    <property type="pathway name" value="DARPP-32 events"/>
</dbReference>
<dbReference type="SignaLink" id="Q07343"/>
<dbReference type="SIGNOR" id="Q07343"/>
<dbReference type="UniPathway" id="UPA00762">
    <property type="reaction ID" value="UER00747"/>
</dbReference>
<dbReference type="BioGRID-ORCS" id="5142">
    <property type="hits" value="13 hits in 1168 CRISPR screens"/>
</dbReference>
<dbReference type="ChiTaRS" id="PDE4B">
    <property type="organism name" value="human"/>
</dbReference>
<dbReference type="EvolutionaryTrace" id="Q07343"/>
<dbReference type="GeneWiki" id="PDE4B"/>
<dbReference type="GenomeRNAi" id="5142"/>
<dbReference type="Pharos" id="Q07343">
    <property type="development level" value="Tclin"/>
</dbReference>
<dbReference type="PRO" id="PR:Q07343"/>
<dbReference type="Proteomes" id="UP000005640">
    <property type="component" value="Chromosome 1"/>
</dbReference>
<dbReference type="RNAct" id="Q07343">
    <property type="molecule type" value="protein"/>
</dbReference>
<dbReference type="Bgee" id="ENSG00000184588">
    <property type="expression patterns" value="Expressed in corpus callosum and 204 other cell types or tissues"/>
</dbReference>
<dbReference type="ExpressionAtlas" id="Q07343">
    <property type="expression patterns" value="baseline and differential"/>
</dbReference>
<dbReference type="GO" id="GO:0005813">
    <property type="term" value="C:centrosome"/>
    <property type="evidence" value="ECO:0007669"/>
    <property type="project" value="Ensembl"/>
</dbReference>
<dbReference type="GO" id="GO:0005829">
    <property type="term" value="C:cytosol"/>
    <property type="evidence" value="ECO:0000304"/>
    <property type="project" value="Reactome"/>
</dbReference>
<dbReference type="GO" id="GO:0043197">
    <property type="term" value="C:dendritic spine"/>
    <property type="evidence" value="ECO:0007669"/>
    <property type="project" value="Ensembl"/>
</dbReference>
<dbReference type="GO" id="GO:0060076">
    <property type="term" value="C:excitatory synapse"/>
    <property type="evidence" value="ECO:0007669"/>
    <property type="project" value="Ensembl"/>
</dbReference>
<dbReference type="GO" id="GO:0000930">
    <property type="term" value="C:gamma-tubulin complex"/>
    <property type="evidence" value="ECO:0007669"/>
    <property type="project" value="Ensembl"/>
</dbReference>
<dbReference type="GO" id="GO:0014069">
    <property type="term" value="C:postsynaptic density"/>
    <property type="evidence" value="ECO:0007669"/>
    <property type="project" value="Ensembl"/>
</dbReference>
<dbReference type="GO" id="GO:0008021">
    <property type="term" value="C:synaptic vesicle"/>
    <property type="evidence" value="ECO:0007669"/>
    <property type="project" value="Ensembl"/>
</dbReference>
<dbReference type="GO" id="GO:0005891">
    <property type="term" value="C:voltage-gated calcium channel complex"/>
    <property type="evidence" value="ECO:0000250"/>
    <property type="project" value="BHF-UCL"/>
</dbReference>
<dbReference type="GO" id="GO:0030018">
    <property type="term" value="C:Z disc"/>
    <property type="evidence" value="ECO:0000250"/>
    <property type="project" value="BHF-UCL"/>
</dbReference>
<dbReference type="GO" id="GO:0004115">
    <property type="term" value="F:3',5'-cyclic-AMP phosphodiesterase activity"/>
    <property type="evidence" value="ECO:0000314"/>
    <property type="project" value="BHF-UCL"/>
</dbReference>
<dbReference type="GO" id="GO:0047555">
    <property type="term" value="F:3',5'-cyclic-GMP phosphodiesterase activity"/>
    <property type="evidence" value="ECO:0000318"/>
    <property type="project" value="GO_Central"/>
</dbReference>
<dbReference type="GO" id="GO:0005246">
    <property type="term" value="F:calcium channel regulator activity"/>
    <property type="evidence" value="ECO:0000250"/>
    <property type="project" value="BHF-UCL"/>
</dbReference>
<dbReference type="GO" id="GO:0030552">
    <property type="term" value="F:cAMP binding"/>
    <property type="evidence" value="ECO:0000316"/>
    <property type="project" value="BHF-UCL"/>
</dbReference>
<dbReference type="GO" id="GO:0043015">
    <property type="term" value="F:gamma-tubulin binding"/>
    <property type="evidence" value="ECO:0007669"/>
    <property type="project" value="Ensembl"/>
</dbReference>
<dbReference type="GO" id="GO:0046872">
    <property type="term" value="F:metal ion binding"/>
    <property type="evidence" value="ECO:0007669"/>
    <property type="project" value="UniProtKB-KW"/>
</dbReference>
<dbReference type="GO" id="GO:0044325">
    <property type="term" value="F:transmembrane transporter binding"/>
    <property type="evidence" value="ECO:0000250"/>
    <property type="project" value="BHF-UCL"/>
</dbReference>
<dbReference type="GO" id="GO:0006198">
    <property type="term" value="P:cAMP catabolic process"/>
    <property type="evidence" value="ECO:0007669"/>
    <property type="project" value="UniProtKB-UniPathway"/>
</dbReference>
<dbReference type="GO" id="GO:0019933">
    <property type="term" value="P:cAMP-mediated signaling"/>
    <property type="evidence" value="ECO:0000318"/>
    <property type="project" value="GO_Central"/>
</dbReference>
<dbReference type="GO" id="GO:0071872">
    <property type="term" value="P:cellular response to epinephrine stimulus"/>
    <property type="evidence" value="ECO:0000250"/>
    <property type="project" value="BHF-UCL"/>
</dbReference>
<dbReference type="GO" id="GO:0071222">
    <property type="term" value="P:cellular response to lipopolysaccharide"/>
    <property type="evidence" value="ECO:0000250"/>
    <property type="project" value="BHF-UCL"/>
</dbReference>
<dbReference type="GO" id="GO:0071466">
    <property type="term" value="P:cellular response to xenobiotic stimulus"/>
    <property type="evidence" value="ECO:0000250"/>
    <property type="project" value="BHF-UCL"/>
</dbReference>
<dbReference type="GO" id="GO:0050900">
    <property type="term" value="P:leukocyte migration"/>
    <property type="evidence" value="ECO:0000250"/>
    <property type="project" value="BHF-UCL"/>
</dbReference>
<dbReference type="GO" id="GO:0071878">
    <property type="term" value="P:negative regulation of adenylate cyclase-activating adrenergic receptor signaling pathway"/>
    <property type="evidence" value="ECO:0000250"/>
    <property type="project" value="BHF-UCL"/>
</dbReference>
<dbReference type="GO" id="GO:1901898">
    <property type="term" value="P:negative regulation of relaxation of cardiac muscle"/>
    <property type="evidence" value="ECO:0000250"/>
    <property type="project" value="BHF-UCL"/>
</dbReference>
<dbReference type="GO" id="GO:0030593">
    <property type="term" value="P:neutrophil chemotaxis"/>
    <property type="evidence" value="ECO:0000250"/>
    <property type="project" value="BHF-UCL"/>
</dbReference>
<dbReference type="GO" id="GO:0001780">
    <property type="term" value="P:neutrophil homeostasis"/>
    <property type="evidence" value="ECO:0000250"/>
    <property type="project" value="BHF-UCL"/>
</dbReference>
<dbReference type="GO" id="GO:0032743">
    <property type="term" value="P:positive regulation of interleukin-2 production"/>
    <property type="evidence" value="ECO:0000315"/>
    <property type="project" value="BHF-UCL"/>
</dbReference>
<dbReference type="GO" id="GO:0032729">
    <property type="term" value="P:positive regulation of type II interferon production"/>
    <property type="evidence" value="ECO:0000315"/>
    <property type="project" value="BHF-UCL"/>
</dbReference>
<dbReference type="GO" id="GO:1902514">
    <property type="term" value="P:regulation of calcium ion transmembrane transport via high voltage-gated calcium channel"/>
    <property type="evidence" value="ECO:0000250"/>
    <property type="project" value="BHF-UCL"/>
</dbReference>
<dbReference type="GO" id="GO:0086004">
    <property type="term" value="P:regulation of cardiac muscle cell contraction"/>
    <property type="evidence" value="ECO:0000250"/>
    <property type="project" value="BHF-UCL"/>
</dbReference>
<dbReference type="GO" id="GO:0050852">
    <property type="term" value="P:T cell receptor signaling pathway"/>
    <property type="evidence" value="ECO:0000315"/>
    <property type="project" value="BHF-UCL"/>
</dbReference>
<dbReference type="CDD" id="cd00077">
    <property type="entry name" value="HDc"/>
    <property type="match status" value="1"/>
</dbReference>
<dbReference type="FunFam" id="1.10.1300.10:FF:000001">
    <property type="entry name" value="Phosphodiesterase"/>
    <property type="match status" value="1"/>
</dbReference>
<dbReference type="Gene3D" id="1.10.1300.10">
    <property type="entry name" value="3'5'-cyclic nucleotide phosphodiesterase, catalytic domain"/>
    <property type="match status" value="1"/>
</dbReference>
<dbReference type="InterPro" id="IPR003607">
    <property type="entry name" value="HD/PDEase_dom"/>
</dbReference>
<dbReference type="InterPro" id="IPR040844">
    <property type="entry name" value="PDE4_UCR"/>
</dbReference>
<dbReference type="InterPro" id="IPR023088">
    <property type="entry name" value="PDEase"/>
</dbReference>
<dbReference type="InterPro" id="IPR002073">
    <property type="entry name" value="PDEase_catalytic_dom"/>
</dbReference>
<dbReference type="InterPro" id="IPR036971">
    <property type="entry name" value="PDEase_catalytic_dom_sf"/>
</dbReference>
<dbReference type="InterPro" id="IPR023174">
    <property type="entry name" value="PDEase_CS"/>
</dbReference>
<dbReference type="PANTHER" id="PTHR11347">
    <property type="entry name" value="CYCLIC NUCLEOTIDE PHOSPHODIESTERASE"/>
    <property type="match status" value="1"/>
</dbReference>
<dbReference type="Pfam" id="PF18100">
    <property type="entry name" value="PDE4_UCR"/>
    <property type="match status" value="1"/>
</dbReference>
<dbReference type="Pfam" id="PF00233">
    <property type="entry name" value="PDEase_I"/>
    <property type="match status" value="1"/>
</dbReference>
<dbReference type="PRINTS" id="PR00387">
    <property type="entry name" value="PDIESTERASE1"/>
</dbReference>
<dbReference type="SMART" id="SM00471">
    <property type="entry name" value="HDc"/>
    <property type="match status" value="1"/>
</dbReference>
<dbReference type="SUPFAM" id="SSF109604">
    <property type="entry name" value="HD-domain/PDEase-like"/>
    <property type="match status" value="1"/>
</dbReference>
<dbReference type="PROSITE" id="PS00126">
    <property type="entry name" value="PDEASE_I_1"/>
    <property type="match status" value="1"/>
</dbReference>
<dbReference type="PROSITE" id="PS51845">
    <property type="entry name" value="PDEASE_I_2"/>
    <property type="match status" value="1"/>
</dbReference>
<organism>
    <name type="scientific">Homo sapiens</name>
    <name type="common">Human</name>
    <dbReference type="NCBI Taxonomy" id="9606"/>
    <lineage>
        <taxon>Eukaryota</taxon>
        <taxon>Metazoa</taxon>
        <taxon>Chordata</taxon>
        <taxon>Craniata</taxon>
        <taxon>Vertebrata</taxon>
        <taxon>Euteleostomi</taxon>
        <taxon>Mammalia</taxon>
        <taxon>Eutheria</taxon>
        <taxon>Euarchontoglires</taxon>
        <taxon>Primates</taxon>
        <taxon>Haplorrhini</taxon>
        <taxon>Catarrhini</taxon>
        <taxon>Hominidae</taxon>
        <taxon>Homo</taxon>
    </lineage>
</organism>
<reference key="1">
    <citation type="journal article" date="1993" name="Gene">
        <title>The cDNA of a human lymphocyte cyclic-AMP phosphodiesterase (PDE IV) reveals a multigene family.</title>
        <authorList>
            <person name="Obernolte R."/>
            <person name="Bhakta S."/>
            <person name="Alvarez R."/>
            <person name="Bach C."/>
            <person name="Mulkins M."/>
            <person name="Jarnagin K."/>
            <person name="Shelton E.R."/>
        </authorList>
    </citation>
    <scope>NUCLEOTIDE SEQUENCE [MRNA] (ISOFORM PDE4B2)</scope>
    <scope>CATALYTIC ACTIVITY</scope>
    <scope>BIOPHYSICOCHEMICAL PROPERTIES</scope>
    <scope>FUNCTION</scope>
</reference>
<reference key="2">
    <citation type="journal article" date="1993" name="Mol. Cell. Biol.">
        <title>A family of human phosphodiesterases homologous to the dunce learning and memory gene product of Drosophila melanogaster are potential targets for antidepressant drugs.</title>
        <authorList>
            <person name="Bolger G."/>
            <person name="Michaeli T."/>
            <person name="Martins T."/>
            <person name="St John T."/>
            <person name="Steiner B."/>
            <person name="Rodgers L."/>
            <person name="Riggs M."/>
            <person name="Wigler M."/>
            <person name="Ferguson K."/>
        </authorList>
    </citation>
    <scope>NUCLEOTIDE SEQUENCE [MRNA] (ISOFORMS PDE4B1 AND PDE4B2)</scope>
    <source>
        <tissue>Brain</tissue>
    </source>
</reference>
<reference key="3">
    <citation type="journal article" date="1997" name="Biochem. J.">
        <title>Molecular cloning and transient expression in COS7 cells of a novel human PDE4B cAMP-specific phosphodiesterase, HSPDE4B3.</title>
        <authorList>
            <person name="Huston E."/>
            <person name="Lumb S."/>
            <person name="Russell A."/>
            <person name="Catterall C."/>
            <person name="Ross A.H."/>
            <person name="Steele M.R."/>
            <person name="Bolger G.B."/>
            <person name="Perry M.J."/>
            <person name="Owens R.J."/>
            <person name="Houslay M.D."/>
        </authorList>
    </citation>
    <scope>NUCLEOTIDE SEQUENCE [MRNA] (ISOFORM PDE4B3)</scope>
    <scope>CATALYTIC ACTIVITY</scope>
    <scope>BIOPHYSICOCHEMICAL PROPERTIES</scope>
</reference>
<reference key="4">
    <citation type="journal article" date="1993" name="J. Biol. Chem.">
        <title>A low-Km, rolipram-sensitive, cAMP-specific phosphodiesterase from human brain. Cloning and expression of cDNA, biochemical characterization of recombinant protein, and tissue distribution of mRNA.</title>
        <authorList>
            <person name="McLaughlin M.M."/>
            <person name="Cieslinski L.B."/>
            <person name="Burman M."/>
            <person name="Torphy T.J."/>
            <person name="Livi G.P."/>
        </authorList>
    </citation>
    <scope>NUCLEOTIDE SEQUENCE [MRNA] (ISOFORM PDE4B2)</scope>
    <source>
        <tissue>Brain</tissue>
    </source>
</reference>
<reference key="5">
    <citation type="journal article" date="2007" name="J. Pharmacol. Exp. Ther.">
        <title>PDE4B5, a novel, super-short, brain-specific cAMP phosphodiesterase-4 variant whose isoform-specifying N-terminal region is identical to that of cAMP phosphodiesterase-4D6 (PDE4D6).</title>
        <authorList>
            <person name="Cheung Y.F."/>
            <person name="Kan Z."/>
            <person name="Garrett-Engele P."/>
            <person name="Gall I."/>
            <person name="Murdoch H."/>
            <person name="Baillie G.S."/>
            <person name="Camargo L.M."/>
            <person name="Johnson J.M."/>
            <person name="Houslay M.D."/>
            <person name="Castle J.C."/>
        </authorList>
    </citation>
    <scope>NUCLEOTIDE SEQUENCE [MRNA] (ISOFORM PDE4B5)</scope>
    <scope>TISSUE SPECIFICITY (ISOFORM PDE4B5)</scope>
    <scope>CATALYTIC ACTIVITY</scope>
    <scope>BIOPHYSICOCHEMICAL PROPERTIES (ISOFORM PDE4B5)</scope>
    <scope>ACTIVITY REGULATION</scope>
    <scope>SUBCELLULAR LOCATION (ISOFORM PDE4B5)</scope>
    <scope>INTERACTION WITH DISC1 (ISOFORM PDE4B5)</scope>
</reference>
<reference key="6">
    <citation type="journal article" date="2004" name="Nat. Genet.">
        <title>Complete sequencing and characterization of 21,243 full-length human cDNAs.</title>
        <authorList>
            <person name="Ota T."/>
            <person name="Suzuki Y."/>
            <person name="Nishikawa T."/>
            <person name="Otsuki T."/>
            <person name="Sugiyama T."/>
            <person name="Irie R."/>
            <person name="Wakamatsu A."/>
            <person name="Hayashi K."/>
            <person name="Sato H."/>
            <person name="Nagai K."/>
            <person name="Kimura K."/>
            <person name="Makita H."/>
            <person name="Sekine M."/>
            <person name="Obayashi M."/>
            <person name="Nishi T."/>
            <person name="Shibahara T."/>
            <person name="Tanaka T."/>
            <person name="Ishii S."/>
            <person name="Yamamoto J."/>
            <person name="Saito K."/>
            <person name="Kawai Y."/>
            <person name="Isono Y."/>
            <person name="Nakamura Y."/>
            <person name="Nagahari K."/>
            <person name="Murakami K."/>
            <person name="Yasuda T."/>
            <person name="Iwayanagi T."/>
            <person name="Wagatsuma M."/>
            <person name="Shiratori A."/>
            <person name="Sudo H."/>
            <person name="Hosoiri T."/>
            <person name="Kaku Y."/>
            <person name="Kodaira H."/>
            <person name="Kondo H."/>
            <person name="Sugawara M."/>
            <person name="Takahashi M."/>
            <person name="Kanda K."/>
            <person name="Yokoi T."/>
            <person name="Furuya T."/>
            <person name="Kikkawa E."/>
            <person name="Omura Y."/>
            <person name="Abe K."/>
            <person name="Kamihara K."/>
            <person name="Katsuta N."/>
            <person name="Sato K."/>
            <person name="Tanikawa M."/>
            <person name="Yamazaki M."/>
            <person name="Ninomiya K."/>
            <person name="Ishibashi T."/>
            <person name="Yamashita H."/>
            <person name="Murakawa K."/>
            <person name="Fujimori K."/>
            <person name="Tanai H."/>
            <person name="Kimata M."/>
            <person name="Watanabe M."/>
            <person name="Hiraoka S."/>
            <person name="Chiba Y."/>
            <person name="Ishida S."/>
            <person name="Ono Y."/>
            <person name="Takiguchi S."/>
            <person name="Watanabe S."/>
            <person name="Yosida M."/>
            <person name="Hotuta T."/>
            <person name="Kusano J."/>
            <person name="Kanehori K."/>
            <person name="Takahashi-Fujii A."/>
            <person name="Hara H."/>
            <person name="Tanase T.-O."/>
            <person name="Nomura Y."/>
            <person name="Togiya S."/>
            <person name="Komai F."/>
            <person name="Hara R."/>
            <person name="Takeuchi K."/>
            <person name="Arita M."/>
            <person name="Imose N."/>
            <person name="Musashino K."/>
            <person name="Yuuki H."/>
            <person name="Oshima A."/>
            <person name="Sasaki N."/>
            <person name="Aotsuka S."/>
            <person name="Yoshikawa Y."/>
            <person name="Matsunawa H."/>
            <person name="Ichihara T."/>
            <person name="Shiohata N."/>
            <person name="Sano S."/>
            <person name="Moriya S."/>
            <person name="Momiyama H."/>
            <person name="Satoh N."/>
            <person name="Takami S."/>
            <person name="Terashima Y."/>
            <person name="Suzuki O."/>
            <person name="Nakagawa S."/>
            <person name="Senoh A."/>
            <person name="Mizoguchi H."/>
            <person name="Goto Y."/>
            <person name="Shimizu F."/>
            <person name="Wakebe H."/>
            <person name="Hishigaki H."/>
            <person name="Watanabe T."/>
            <person name="Sugiyama A."/>
            <person name="Takemoto M."/>
            <person name="Kawakami B."/>
            <person name="Yamazaki M."/>
            <person name="Watanabe K."/>
            <person name="Kumagai A."/>
            <person name="Itakura S."/>
            <person name="Fukuzumi Y."/>
            <person name="Fujimori Y."/>
            <person name="Komiyama M."/>
            <person name="Tashiro H."/>
            <person name="Tanigami A."/>
            <person name="Fujiwara T."/>
            <person name="Ono T."/>
            <person name="Yamada K."/>
            <person name="Fujii Y."/>
            <person name="Ozaki K."/>
            <person name="Hirao M."/>
            <person name="Ohmori Y."/>
            <person name="Kawabata A."/>
            <person name="Hikiji T."/>
            <person name="Kobatake N."/>
            <person name="Inagaki H."/>
            <person name="Ikema Y."/>
            <person name="Okamoto S."/>
            <person name="Okitani R."/>
            <person name="Kawakami T."/>
            <person name="Noguchi S."/>
            <person name="Itoh T."/>
            <person name="Shigeta K."/>
            <person name="Senba T."/>
            <person name="Matsumura K."/>
            <person name="Nakajima Y."/>
            <person name="Mizuno T."/>
            <person name="Morinaga M."/>
            <person name="Sasaki M."/>
            <person name="Togashi T."/>
            <person name="Oyama M."/>
            <person name="Hata H."/>
            <person name="Watanabe M."/>
            <person name="Komatsu T."/>
            <person name="Mizushima-Sugano J."/>
            <person name="Satoh T."/>
            <person name="Shirai Y."/>
            <person name="Takahashi Y."/>
            <person name="Nakagawa K."/>
            <person name="Okumura K."/>
            <person name="Nagase T."/>
            <person name="Nomura N."/>
            <person name="Kikuchi H."/>
            <person name="Masuho Y."/>
            <person name="Yamashita R."/>
            <person name="Nakai K."/>
            <person name="Yada T."/>
            <person name="Nakamura Y."/>
            <person name="Ohara O."/>
            <person name="Isogai T."/>
            <person name="Sugano S."/>
        </authorList>
    </citation>
    <scope>NUCLEOTIDE SEQUENCE [LARGE SCALE MRNA] (ISOFORMS PDE4B1; PDE4B3 AND PDE4B5)</scope>
    <source>
        <tissue>Hippocampus</tissue>
        <tissue>Thalamus</tissue>
    </source>
</reference>
<reference key="7">
    <citation type="journal article" date="2006" name="Nature">
        <title>The DNA sequence and biological annotation of human chromosome 1.</title>
        <authorList>
            <person name="Gregory S.G."/>
            <person name="Barlow K.F."/>
            <person name="McLay K.E."/>
            <person name="Kaul R."/>
            <person name="Swarbreck D."/>
            <person name="Dunham A."/>
            <person name="Scott C.E."/>
            <person name="Howe K.L."/>
            <person name="Woodfine K."/>
            <person name="Spencer C.C.A."/>
            <person name="Jones M.C."/>
            <person name="Gillson C."/>
            <person name="Searle S."/>
            <person name="Zhou Y."/>
            <person name="Kokocinski F."/>
            <person name="McDonald L."/>
            <person name="Evans R."/>
            <person name="Phillips K."/>
            <person name="Atkinson A."/>
            <person name="Cooper R."/>
            <person name="Jones C."/>
            <person name="Hall R.E."/>
            <person name="Andrews T.D."/>
            <person name="Lloyd C."/>
            <person name="Ainscough R."/>
            <person name="Almeida J.P."/>
            <person name="Ambrose K.D."/>
            <person name="Anderson F."/>
            <person name="Andrew R.W."/>
            <person name="Ashwell R.I.S."/>
            <person name="Aubin K."/>
            <person name="Babbage A.K."/>
            <person name="Bagguley C.L."/>
            <person name="Bailey J."/>
            <person name="Beasley H."/>
            <person name="Bethel G."/>
            <person name="Bird C.P."/>
            <person name="Bray-Allen S."/>
            <person name="Brown J.Y."/>
            <person name="Brown A.J."/>
            <person name="Buckley D."/>
            <person name="Burton J."/>
            <person name="Bye J."/>
            <person name="Carder C."/>
            <person name="Chapman J.C."/>
            <person name="Clark S.Y."/>
            <person name="Clarke G."/>
            <person name="Clee C."/>
            <person name="Cobley V."/>
            <person name="Collier R.E."/>
            <person name="Corby N."/>
            <person name="Coville G.J."/>
            <person name="Davies J."/>
            <person name="Deadman R."/>
            <person name="Dunn M."/>
            <person name="Earthrowl M."/>
            <person name="Ellington A.G."/>
            <person name="Errington H."/>
            <person name="Frankish A."/>
            <person name="Frankland J."/>
            <person name="French L."/>
            <person name="Garner P."/>
            <person name="Garnett J."/>
            <person name="Gay L."/>
            <person name="Ghori M.R.J."/>
            <person name="Gibson R."/>
            <person name="Gilby L.M."/>
            <person name="Gillett W."/>
            <person name="Glithero R.J."/>
            <person name="Grafham D.V."/>
            <person name="Griffiths C."/>
            <person name="Griffiths-Jones S."/>
            <person name="Grocock R."/>
            <person name="Hammond S."/>
            <person name="Harrison E.S.I."/>
            <person name="Hart E."/>
            <person name="Haugen E."/>
            <person name="Heath P.D."/>
            <person name="Holmes S."/>
            <person name="Holt K."/>
            <person name="Howden P.J."/>
            <person name="Hunt A.R."/>
            <person name="Hunt S.E."/>
            <person name="Hunter G."/>
            <person name="Isherwood J."/>
            <person name="James R."/>
            <person name="Johnson C."/>
            <person name="Johnson D."/>
            <person name="Joy A."/>
            <person name="Kay M."/>
            <person name="Kershaw J.K."/>
            <person name="Kibukawa M."/>
            <person name="Kimberley A.M."/>
            <person name="King A."/>
            <person name="Knights A.J."/>
            <person name="Lad H."/>
            <person name="Laird G."/>
            <person name="Lawlor S."/>
            <person name="Leongamornlert D.A."/>
            <person name="Lloyd D.M."/>
            <person name="Loveland J."/>
            <person name="Lovell J."/>
            <person name="Lush M.J."/>
            <person name="Lyne R."/>
            <person name="Martin S."/>
            <person name="Mashreghi-Mohammadi M."/>
            <person name="Matthews L."/>
            <person name="Matthews N.S.W."/>
            <person name="McLaren S."/>
            <person name="Milne S."/>
            <person name="Mistry S."/>
            <person name="Moore M.J.F."/>
            <person name="Nickerson T."/>
            <person name="O'Dell C.N."/>
            <person name="Oliver K."/>
            <person name="Palmeiri A."/>
            <person name="Palmer S.A."/>
            <person name="Parker A."/>
            <person name="Patel D."/>
            <person name="Pearce A.V."/>
            <person name="Peck A.I."/>
            <person name="Pelan S."/>
            <person name="Phelps K."/>
            <person name="Phillimore B.J."/>
            <person name="Plumb R."/>
            <person name="Rajan J."/>
            <person name="Raymond C."/>
            <person name="Rouse G."/>
            <person name="Saenphimmachak C."/>
            <person name="Sehra H.K."/>
            <person name="Sheridan E."/>
            <person name="Shownkeen R."/>
            <person name="Sims S."/>
            <person name="Skuce C.D."/>
            <person name="Smith M."/>
            <person name="Steward C."/>
            <person name="Subramanian S."/>
            <person name="Sycamore N."/>
            <person name="Tracey A."/>
            <person name="Tromans A."/>
            <person name="Van Helmond Z."/>
            <person name="Wall M."/>
            <person name="Wallis J.M."/>
            <person name="White S."/>
            <person name="Whitehead S.L."/>
            <person name="Wilkinson J.E."/>
            <person name="Willey D.L."/>
            <person name="Williams H."/>
            <person name="Wilming L."/>
            <person name="Wray P.W."/>
            <person name="Wu Z."/>
            <person name="Coulson A."/>
            <person name="Vaudin M."/>
            <person name="Sulston J.E."/>
            <person name="Durbin R.M."/>
            <person name="Hubbard T."/>
            <person name="Wooster R."/>
            <person name="Dunham I."/>
            <person name="Carter N.P."/>
            <person name="McVean G."/>
            <person name="Ross M.T."/>
            <person name="Harrow J."/>
            <person name="Olson M.V."/>
            <person name="Beck S."/>
            <person name="Rogers J."/>
            <person name="Bentley D.R."/>
        </authorList>
    </citation>
    <scope>NUCLEOTIDE SEQUENCE [LARGE SCALE GENOMIC DNA]</scope>
</reference>
<reference key="8">
    <citation type="submission" date="2005-09" db="EMBL/GenBank/DDBJ databases">
        <authorList>
            <person name="Mural R.J."/>
            <person name="Istrail S."/>
            <person name="Sutton G."/>
            <person name="Florea L."/>
            <person name="Halpern A.L."/>
            <person name="Mobarry C.M."/>
            <person name="Lippert R."/>
            <person name="Walenz B."/>
            <person name="Shatkay H."/>
            <person name="Dew I."/>
            <person name="Miller J.R."/>
            <person name="Flanigan M.J."/>
            <person name="Edwards N.J."/>
            <person name="Bolanos R."/>
            <person name="Fasulo D."/>
            <person name="Halldorsson B.V."/>
            <person name="Hannenhalli S."/>
            <person name="Turner R."/>
            <person name="Yooseph S."/>
            <person name="Lu F."/>
            <person name="Nusskern D.R."/>
            <person name="Shue B.C."/>
            <person name="Zheng X.H."/>
            <person name="Zhong F."/>
            <person name="Delcher A.L."/>
            <person name="Huson D.H."/>
            <person name="Kravitz S.A."/>
            <person name="Mouchard L."/>
            <person name="Reinert K."/>
            <person name="Remington K.A."/>
            <person name="Clark A.G."/>
            <person name="Waterman M.S."/>
            <person name="Eichler E.E."/>
            <person name="Adams M.D."/>
            <person name="Hunkapiller M.W."/>
            <person name="Myers E.W."/>
            <person name="Venter J.C."/>
        </authorList>
    </citation>
    <scope>NUCLEOTIDE SEQUENCE [LARGE SCALE GENOMIC DNA]</scope>
</reference>
<reference key="9">
    <citation type="journal article" date="2004" name="Genome Res.">
        <title>The status, quality, and expansion of the NIH full-length cDNA project: the Mammalian Gene Collection (MGC).</title>
        <authorList>
            <consortium name="The MGC Project Team"/>
        </authorList>
    </citation>
    <scope>NUCLEOTIDE SEQUENCE [LARGE SCALE MRNA] (ISOFORM PDE4B1)</scope>
    <source>
        <tissue>Brain</tissue>
    </source>
</reference>
<reference evidence="28" key="10">
    <citation type="journal article" date="2000" name="Science">
        <title>Atomic structure of PDE4: insights into phosphodiesterase mechanism and specificity.</title>
        <authorList>
            <person name="Xu R.X."/>
            <person name="Hassell A.M."/>
            <person name="Vanderwall D."/>
            <person name="Lambert M.H."/>
            <person name="Holmes W.D."/>
            <person name="Luther M.A."/>
            <person name="Rocque W.J."/>
            <person name="Milburn M.V."/>
            <person name="Zhao Y."/>
            <person name="Ke H."/>
            <person name="Nolte R.T."/>
        </authorList>
    </citation>
    <scope>X-RAY CRYSTALLOGRAPHY (1.77 ANGSTROMS) OF 324-700 IN COMPLEX WITH ZINC AND MAGNESIUM</scope>
    <scope>FUNCTION</scope>
    <scope>COFACTOR</scope>
</reference>
<reference evidence="29 30 31" key="11">
    <citation type="journal article" date="2004" name="J. Mol. Biol.">
        <title>Crystal structures of the catalytic domain of phosphodiesterase 4B complexed with AMP, 8-Br-AMP, and rolipram.</title>
        <authorList>
            <person name="Xu R.X."/>
            <person name="Rocque W.J."/>
            <person name="Lambert M.H."/>
            <person name="Vanderwall D.E."/>
            <person name="Luther M.A."/>
            <person name="Nolte R.T."/>
        </authorList>
    </citation>
    <scope>X-RAY CRYSTALLOGRAPHY (2.00 ANGSTROMS) OF 324-700 IN COMPLEX WITH AMP; ZINC; MANGANESE; MAGNESIUM AND THE INHIBITOR ROLIPRAM</scope>
    <scope>FUNCTION</scope>
    <scope>COFACTOR</scope>
    <scope>ACTIVE SITE</scope>
</reference>
<reference evidence="32" key="12">
    <citation type="journal article" date="2004" name="Mol. Cell">
        <title>A glutamine switch mechanism for nucleotide selectivity by phosphodiesterases.</title>
        <authorList>
            <person name="Zhang K.Y.J."/>
            <person name="Card G.L."/>
            <person name="Suzuki Y."/>
            <person name="Artis D.R."/>
            <person name="Fong D."/>
            <person name="Gillette S."/>
            <person name="Hsieh D."/>
            <person name="Neiman J."/>
            <person name="West B.L."/>
            <person name="Zhang C."/>
            <person name="Milburn M.V."/>
            <person name="Kim S.-H."/>
            <person name="Schlessinger J."/>
            <person name="Bollag G."/>
        </authorList>
    </citation>
    <scope>X-RAY CRYSTALLOGRAPHY (2.15 ANGSTROMS) OF 324-700 IN COMPLEX WITH AMP; ZINC AND MAGNESIUM</scope>
    <scope>MUTAGENESIS OF 567-ASN--TYR-575; ASN-567; TYR-575 AND TYR-652</scope>
    <scope>FUNCTION</scope>
    <scope>CATALYTIC ACTIVITY</scope>
</reference>
<reference evidence="33 34 35 36 37 38 39 40 41" key="13">
    <citation type="journal article" date="2004" name="Structure">
        <title>Structural basis for the activity of drugs that inhibit phosphodiesterases.</title>
        <authorList>
            <person name="Card G.L."/>
            <person name="England B.P."/>
            <person name="Suzuki Y."/>
            <person name="Fong D."/>
            <person name="Powell B."/>
            <person name="Lee B."/>
            <person name="Luu C."/>
            <person name="Tabrizizad M."/>
            <person name="Gillette S."/>
            <person name="Ibrahim P.N."/>
            <person name="Artis D.R."/>
            <person name="Bollag G."/>
            <person name="Milburn M.V."/>
            <person name="Kim S.-H."/>
            <person name="Schlessinger J."/>
            <person name="Zhang K.Y.J."/>
        </authorList>
    </citation>
    <scope>X-RAY CRYSTALLOGRAPHY (1.92 ANGSTROMS) OF 324-700 IN COMPLEX WITH ZINC; MAGNESIUM AND INHIBITORS</scope>
</reference>
<reference evidence="42 43" key="14">
    <citation type="journal article" date="2005" name="Nat. Biotechnol.">
        <title>A family of phosphodiesterase inhibitors discovered by cocrystallography and scaffold-based drug design.</title>
        <authorList>
            <person name="Card G.L."/>
            <person name="Blasdel L."/>
            <person name="England B.P."/>
            <person name="Zhang C."/>
            <person name="Suzuki Y."/>
            <person name="Gillette S."/>
            <person name="Fong D."/>
            <person name="Ibrahim P.N."/>
            <person name="Artis D.R."/>
            <person name="Bollag G."/>
            <person name="Milburn M.V."/>
            <person name="Kim S.-H."/>
            <person name="Schlessinger J."/>
            <person name="Zhang K.Y.J."/>
        </authorList>
    </citation>
    <scope>X-RAY CRYSTALLOGRAPHY (2.40 ANGSTROMS) OF 324-700 IN COMPLEX WITH ZINC; MAGNESIUM AND INHIBITORS</scope>
</reference>
<reference evidence="44" key="15">
    <citation type="journal article" date="2007" name="Biochem. J.">
        <title>Structures of the four subfamilies of phosphodiesterase-4 provide insight into the selectivity of their inhibitors.</title>
        <authorList>
            <person name="Wang H."/>
            <person name="Peng M.-S."/>
            <person name="Chen Y."/>
            <person name="Geng J."/>
            <person name="Robinson H."/>
            <person name="Houslay M.D."/>
            <person name="Cai J."/>
            <person name="Ke H."/>
        </authorList>
    </citation>
    <scope>X-RAY CRYSTALLOGRAPHY (1.95 ANGSTROMS) OF 324-659 IN COMPLEX WITH ZINC AND THE INHIBITOR NVP</scope>
</reference>
<reference evidence="45" key="16">
    <citation type="journal article" date="2008" name="Bioorg. Med. Chem. Lett.">
        <title>Pyrazolopyridines as a novel structural class of potent and selective PDE4 inhibitors.</title>
        <authorList>
            <person name="Hamblin J.N."/>
            <person name="Angell T.D.R."/>
            <person name="Ballantine S.P."/>
            <person name="Cook C.M."/>
            <person name="Cooper A.W.J."/>
            <person name="Dawson J."/>
            <person name="Delves C.J."/>
            <person name="Jones P.S."/>
            <person name="Lindvall M."/>
            <person name="Lucas F.S."/>
            <person name="Mitchell C.J."/>
            <person name="Neu M.Y."/>
            <person name="Ranshaw L.E."/>
            <person name="Solanke Y.E."/>
            <person name="Somers D.O."/>
            <person name="Wiseman J.O."/>
        </authorList>
    </citation>
    <scope>X-RAY CRYSTALLOGRAPHY (1.75 ANGSTROMS) OF 324-675 IN COMPLEX WITH ZINC; MAGNESIUM AND INHIBITOR</scope>
</reference>
<proteinExistence type="evidence at protein level"/>
<comment type="function">
    <text evidence="5 6 7">Hydrolyzes the second messenger cAMP, which is a key regulator of many important physiological processes (PubMed:15260978). May be involved in mediating central nervous system effects of therapeutic agents ranging from antidepressants to antiasthmatic and anti-inflammatory agents.</text>
</comment>
<comment type="catalytic activity">
    <reaction evidence="7 10 13 14">
        <text>3',5'-cyclic AMP + H2O = AMP + H(+)</text>
        <dbReference type="Rhea" id="RHEA:25277"/>
        <dbReference type="ChEBI" id="CHEBI:15377"/>
        <dbReference type="ChEBI" id="CHEBI:15378"/>
        <dbReference type="ChEBI" id="CHEBI:58165"/>
        <dbReference type="ChEBI" id="CHEBI:456215"/>
        <dbReference type="EC" id="3.1.4.53"/>
    </reaction>
    <physiologicalReaction direction="left-to-right" evidence="23 24 25 26">
        <dbReference type="Rhea" id="RHEA:25278"/>
    </physiologicalReaction>
</comment>
<comment type="cofactor">
    <cofactor evidence="5 6">
        <name>Zn(2+)</name>
        <dbReference type="ChEBI" id="CHEBI:29105"/>
    </cofactor>
    <text evidence="5 6">Binds 2 divalent metal cations per subunit. Site 1 may preferentially bind zinc ions.</text>
</comment>
<comment type="cofactor">
    <cofactor evidence="5 6">
        <name>Mg(2+)</name>
        <dbReference type="ChEBI" id="CHEBI:18420"/>
    </cofactor>
    <cofactor evidence="6">
        <name>Mn(2+)</name>
        <dbReference type="ChEBI" id="CHEBI:29035"/>
    </cofactor>
    <text evidence="5 6">Binds 2 divalent metal cations per subunit. Site 2 has a preference for magnesium and/or manganese ions.</text>
</comment>
<comment type="activity regulation">
    <text evidence="10">Inhibited by rolipram.</text>
</comment>
<comment type="biophysicochemical properties">
    <molecule>Isoform PDE4B2</molecule>
    <kinetics>
        <KM evidence="13">15 uM for 3',5'-cyclic AMP</KM>
        <KM evidence="13">2.6 uM for 3',5'-cyclic AMP</KM>
    </kinetics>
</comment>
<comment type="biophysicochemical properties">
    <molecule>Isoform PDE4B1</molecule>
    <kinetics>
        <KM evidence="13">2 uM for 3',5'-cyclic AMP</KM>
    </kinetics>
</comment>
<comment type="biophysicochemical properties">
    <molecule>Isoform PDE4B3</molecule>
    <kinetics>
        <KM evidence="13">1.5 uM for 3',5'-cyclic AMP</KM>
    </kinetics>
</comment>
<comment type="biophysicochemical properties">
    <molecule>Isoform PDE4B5</molecule>
    <kinetics>
        <KM evidence="10">5.8 uM for 3',5'-cyclic AMP</KM>
    </kinetics>
</comment>
<comment type="pathway">
    <text evidence="23 25 26">Purine metabolism; 3',5'-cyclic AMP degradation; AMP from 3',5'-cyclic AMP: step 1/1.</text>
</comment>
<comment type="subunit">
    <molecule>Isoform PDE4B5</molecule>
    <text evidence="10">Interacts with DISC1.</text>
</comment>
<comment type="interaction">
    <interactant intactId="EBI-1105102">
        <id>Q07343</id>
    </interactant>
    <interactant intactId="EBI-1038838">
        <id>Q13936</id>
        <label>CACNA1C</label>
    </interactant>
    <organismsDiffer>false</organismsDiffer>
    <experiments>2</experiments>
</comment>
<comment type="interaction">
    <interactant intactId="EBI-1105102">
        <id>Q07343</id>
    </interactant>
    <interactant intactId="EBI-1642831">
        <id>Q08499</id>
        <label>PDE4D</label>
    </interactant>
    <organismsDiffer>false</organismsDiffer>
    <experiments>2</experiments>
</comment>
<comment type="subcellular location">
    <molecule>Isoform PDE4B5</molecule>
    <subcellularLocation>
        <location evidence="10">Cytoplasm</location>
    </subcellularLocation>
    <subcellularLocation>
        <location evidence="10">Cell membrane</location>
    </subcellularLocation>
</comment>
<comment type="alternative products">
    <event type="alternative splicing"/>
    <isoform>
        <id>Q07343-1</id>
        <name evidence="20">PDE4B1</name>
        <sequence type="displayed"/>
    </isoform>
    <isoform>
        <id>Q07343-2</id>
        <name evidence="20">PDE4B2</name>
        <sequence type="described" ref="VSP_004572"/>
    </isoform>
    <isoform>
        <id>Q07343-3</id>
        <name evidence="20">PDE4B3</name>
        <sequence type="described" ref="VSP_004571"/>
    </isoform>
    <isoform>
        <id>Q07343-4</id>
        <name evidence="16">PDE4B5</name>
        <sequence type="described" ref="VSP_047723 VSP_047724"/>
    </isoform>
    <text>Additional isoforms seem to exist.</text>
</comment>
<comment type="tissue specificity">
    <text evidence="10 13">Expressed in brain, heart, lung and skeletal muscle (PubMed:17519386). Expressed in white blood cells (PubMed:8392015).</text>
</comment>
<comment type="tissue specificity">
    <molecule>Isoform PDE4B5</molecule>
    <text evidence="10">Brain-specific isoform.</text>
</comment>
<comment type="similarity">
    <text evidence="21">Belongs to the cyclic nucleotide phosphodiesterase family. PDE4 subfamily.</text>
</comment>
<comment type="sequence caution" evidence="21">
    <conflict type="erroneous initiation">
        <sequence resource="EMBL-CDS" id="AAA35643"/>
    </conflict>
    <text>Extended N-terminus.</text>
</comment>
<name>PDE4B_HUMAN</name>
<protein>
    <recommendedName>
        <fullName evidence="21">3',5'-cyclic-AMP phosphodiesterase 4B</fullName>
        <ecNumber evidence="7 10 13 14">3.1.4.53</ecNumber>
    </recommendedName>
    <alternativeName>
        <fullName>DPDE4</fullName>
    </alternativeName>
    <alternativeName>
        <fullName>PDE32</fullName>
    </alternativeName>
    <alternativeName>
        <fullName evidence="21">cAMP-specific phosphodiesterase 4B</fullName>
    </alternativeName>
</protein>